<dbReference type="EMBL" id="CP001339">
    <property type="protein sequence ID" value="ACL73098.1"/>
    <property type="molecule type" value="Genomic_DNA"/>
</dbReference>
<dbReference type="RefSeq" id="WP_012638577.1">
    <property type="nucleotide sequence ID" value="NC_011901.1"/>
</dbReference>
<dbReference type="STRING" id="396588.Tgr7_2018"/>
<dbReference type="KEGG" id="tgr:Tgr7_2018"/>
<dbReference type="eggNOG" id="COG2917">
    <property type="taxonomic scope" value="Bacteria"/>
</dbReference>
<dbReference type="HOGENOM" id="CLU_089554_2_0_6"/>
<dbReference type="OrthoDB" id="9788219at2"/>
<dbReference type="Proteomes" id="UP000002383">
    <property type="component" value="Chromosome"/>
</dbReference>
<dbReference type="GO" id="GO:0005886">
    <property type="term" value="C:plasma membrane"/>
    <property type="evidence" value="ECO:0007669"/>
    <property type="project" value="UniProtKB-SubCell"/>
</dbReference>
<dbReference type="HAMAP" id="MF_00189">
    <property type="entry name" value="YciB"/>
    <property type="match status" value="1"/>
</dbReference>
<dbReference type="InterPro" id="IPR006008">
    <property type="entry name" value="YciB"/>
</dbReference>
<dbReference type="NCBIfam" id="NF001325">
    <property type="entry name" value="PRK00259.1-3"/>
    <property type="match status" value="1"/>
</dbReference>
<dbReference type="PANTHER" id="PTHR36917:SF1">
    <property type="entry name" value="INNER MEMBRANE-SPANNING PROTEIN YCIB"/>
    <property type="match status" value="1"/>
</dbReference>
<dbReference type="PANTHER" id="PTHR36917">
    <property type="entry name" value="INTRACELLULAR SEPTATION PROTEIN A-RELATED"/>
    <property type="match status" value="1"/>
</dbReference>
<dbReference type="Pfam" id="PF04279">
    <property type="entry name" value="IspA"/>
    <property type="match status" value="1"/>
</dbReference>
<keyword id="KW-0997">Cell inner membrane</keyword>
<keyword id="KW-1003">Cell membrane</keyword>
<keyword id="KW-0472">Membrane</keyword>
<keyword id="KW-1185">Reference proteome</keyword>
<keyword id="KW-0812">Transmembrane</keyword>
<keyword id="KW-1133">Transmembrane helix</keyword>
<proteinExistence type="inferred from homology"/>
<feature type="chain" id="PRO_1000124261" description="Inner membrane-spanning protein YciB">
    <location>
        <begin position="1"/>
        <end position="212"/>
    </location>
</feature>
<feature type="transmembrane region" description="Helical" evidence="1">
    <location>
        <begin position="19"/>
        <end position="39"/>
    </location>
</feature>
<feature type="transmembrane region" description="Helical" evidence="1">
    <location>
        <begin position="47"/>
        <end position="67"/>
    </location>
</feature>
<feature type="transmembrane region" description="Helical" evidence="1">
    <location>
        <begin position="82"/>
        <end position="102"/>
    </location>
</feature>
<feature type="transmembrane region" description="Helical" evidence="1">
    <location>
        <begin position="105"/>
        <end position="122"/>
    </location>
</feature>
<feature type="transmembrane region" description="Helical" evidence="1">
    <location>
        <begin position="147"/>
        <end position="167"/>
    </location>
</feature>
<feature type="transmembrane region" description="Helical" evidence="1">
    <location>
        <begin position="177"/>
        <end position="197"/>
    </location>
</feature>
<accession>B8GT83</accession>
<gene>
    <name evidence="1" type="primary">yciB</name>
    <name type="ordered locus">Tgr7_2018</name>
</gene>
<name>YCIB_THISH</name>
<sequence>MKLLYDLLPVILFFLAYKFYGALPPEWILAVGVWLPVALEPDNPGHAIYLATAVAMVVMAVQLALGLAIKRRLETMPLLTAAVILVLGGATLWLHDPVFILWKPTLVNWLFALVFMAPPLFGRRTLVETLMGHALSVPRAIWSRVNLAWVVFFLVSGLANLFVAYTFSEAVWVDFKLFGMLGMTFVFVIGQAVYLGLHHREDDPHTTKGDPS</sequence>
<reference key="1">
    <citation type="journal article" date="2011" name="Stand. Genomic Sci.">
        <title>Complete genome sequence of 'Thioalkalivibrio sulfidophilus' HL-EbGr7.</title>
        <authorList>
            <person name="Muyzer G."/>
            <person name="Sorokin D.Y."/>
            <person name="Mavromatis K."/>
            <person name="Lapidus A."/>
            <person name="Clum A."/>
            <person name="Ivanova N."/>
            <person name="Pati A."/>
            <person name="d'Haeseleer P."/>
            <person name="Woyke T."/>
            <person name="Kyrpides N.C."/>
        </authorList>
    </citation>
    <scope>NUCLEOTIDE SEQUENCE [LARGE SCALE GENOMIC DNA]</scope>
    <source>
        <strain>HL-EbGR7</strain>
    </source>
</reference>
<evidence type="ECO:0000255" key="1">
    <source>
        <dbReference type="HAMAP-Rule" id="MF_00189"/>
    </source>
</evidence>
<comment type="function">
    <text evidence="1">Plays a role in cell envelope biogenesis, maintenance of cell envelope integrity and membrane homeostasis.</text>
</comment>
<comment type="subcellular location">
    <subcellularLocation>
        <location evidence="1">Cell inner membrane</location>
        <topology evidence="1">Multi-pass membrane protein</topology>
    </subcellularLocation>
</comment>
<comment type="similarity">
    <text evidence="1">Belongs to the YciB family.</text>
</comment>
<organism>
    <name type="scientific">Thioalkalivibrio sulfidiphilus (strain HL-EbGR7)</name>
    <dbReference type="NCBI Taxonomy" id="396588"/>
    <lineage>
        <taxon>Bacteria</taxon>
        <taxon>Pseudomonadati</taxon>
        <taxon>Pseudomonadota</taxon>
        <taxon>Gammaproteobacteria</taxon>
        <taxon>Chromatiales</taxon>
        <taxon>Ectothiorhodospiraceae</taxon>
        <taxon>Thioalkalivibrio</taxon>
    </lineage>
</organism>
<protein>
    <recommendedName>
        <fullName evidence="1">Inner membrane-spanning protein YciB</fullName>
    </recommendedName>
</protein>